<sequence length="408" mass="44921">MDKLLERFLNYVSLDTQSKAGVRQVPSTEGQWKLLHLLKEQLEEMGLINVTLSEKGTLMATLPANVPGDIPAIGFISHVDTSPDCSGKNVNPQIVENYRGGDIALGIGDEVLSPVMFPVLHQLLGQTLITTDGKTLLGADDKAGIAEIMTALAVLQQKNIPHGDIRVAFTPDEEVGKGAKHFDVDAFDARWAYTVDGGGVGELEFENFNAASVNIKIVGNNVHPGTAKGVMVNALSLAARIHAEVPADESPEMTEGYEGFYHLASMKGTVERADMHYIIRDFDRKQFEARKRKMMEIAKKVGKGLHPDCYIELVIEDSYYNMREKVVEHPHILDIAQQAMRDCDIEPELKPIRGGTDGAQLSFMGLPCPNLFTGGYNYHGKHEFVILEGMEKAVQVIVRIAELTAQRK</sequence>
<comment type="function">
    <text evidence="1">Cleaves the N-terminal amino acid of tripeptides.</text>
</comment>
<comment type="catalytic activity">
    <reaction evidence="1">
        <text>Release of the N-terminal residue from a tripeptide.</text>
        <dbReference type="EC" id="3.4.11.4"/>
    </reaction>
</comment>
<comment type="cofactor">
    <cofactor evidence="1">
        <name>Zn(2+)</name>
        <dbReference type="ChEBI" id="CHEBI:29105"/>
    </cofactor>
    <text evidence="1">Binds 2 Zn(2+) ions per subunit.</text>
</comment>
<comment type="subcellular location">
    <subcellularLocation>
        <location evidence="1">Cytoplasm</location>
    </subcellularLocation>
</comment>
<comment type="similarity">
    <text evidence="1">Belongs to the peptidase M20B family.</text>
</comment>
<organism>
    <name type="scientific">Shigella flexneri serotype 5b (strain 8401)</name>
    <dbReference type="NCBI Taxonomy" id="373384"/>
    <lineage>
        <taxon>Bacteria</taxon>
        <taxon>Pseudomonadati</taxon>
        <taxon>Pseudomonadota</taxon>
        <taxon>Gammaproteobacteria</taxon>
        <taxon>Enterobacterales</taxon>
        <taxon>Enterobacteriaceae</taxon>
        <taxon>Shigella</taxon>
    </lineage>
</organism>
<evidence type="ECO:0000255" key="1">
    <source>
        <dbReference type="HAMAP-Rule" id="MF_00550"/>
    </source>
</evidence>
<keyword id="KW-0031">Aminopeptidase</keyword>
<keyword id="KW-0963">Cytoplasm</keyword>
<keyword id="KW-0378">Hydrolase</keyword>
<keyword id="KW-0479">Metal-binding</keyword>
<keyword id="KW-0482">Metalloprotease</keyword>
<keyword id="KW-0645">Protease</keyword>
<keyword id="KW-0862">Zinc</keyword>
<name>PEPT_SHIF8</name>
<feature type="chain" id="PRO_1000017850" description="Peptidase T">
    <location>
        <begin position="1"/>
        <end position="408"/>
    </location>
</feature>
<feature type="active site" evidence="1">
    <location>
        <position position="80"/>
    </location>
</feature>
<feature type="active site" description="Proton acceptor" evidence="1">
    <location>
        <position position="173"/>
    </location>
</feature>
<feature type="binding site" evidence="1">
    <location>
        <position position="78"/>
    </location>
    <ligand>
        <name>Zn(2+)</name>
        <dbReference type="ChEBI" id="CHEBI:29105"/>
        <label>1</label>
    </ligand>
</feature>
<feature type="binding site" evidence="1">
    <location>
        <position position="140"/>
    </location>
    <ligand>
        <name>Zn(2+)</name>
        <dbReference type="ChEBI" id="CHEBI:29105"/>
        <label>1</label>
    </ligand>
</feature>
<feature type="binding site" evidence="1">
    <location>
        <position position="140"/>
    </location>
    <ligand>
        <name>Zn(2+)</name>
        <dbReference type="ChEBI" id="CHEBI:29105"/>
        <label>2</label>
    </ligand>
</feature>
<feature type="binding site" evidence="1">
    <location>
        <position position="174"/>
    </location>
    <ligand>
        <name>Zn(2+)</name>
        <dbReference type="ChEBI" id="CHEBI:29105"/>
        <label>2</label>
    </ligand>
</feature>
<feature type="binding site" evidence="1">
    <location>
        <position position="196"/>
    </location>
    <ligand>
        <name>Zn(2+)</name>
        <dbReference type="ChEBI" id="CHEBI:29105"/>
        <label>1</label>
    </ligand>
</feature>
<feature type="binding site" evidence="1">
    <location>
        <position position="379"/>
    </location>
    <ligand>
        <name>Zn(2+)</name>
        <dbReference type="ChEBI" id="CHEBI:29105"/>
        <label>2</label>
    </ligand>
</feature>
<protein>
    <recommendedName>
        <fullName evidence="1">Peptidase T</fullName>
        <ecNumber evidence="1">3.4.11.4</ecNumber>
    </recommendedName>
    <alternativeName>
        <fullName evidence="1">Aminotripeptidase</fullName>
        <shortName evidence="1">Tripeptidase</shortName>
    </alternativeName>
    <alternativeName>
        <fullName evidence="1">Tripeptide aminopeptidase</fullName>
    </alternativeName>
</protein>
<accession>Q0T5R1</accession>
<gene>
    <name evidence="1" type="primary">pepT</name>
    <name type="ordered locus">SFV_1145</name>
</gene>
<proteinExistence type="inferred from homology"/>
<reference key="1">
    <citation type="journal article" date="2006" name="BMC Genomics">
        <title>Complete genome sequence of Shigella flexneri 5b and comparison with Shigella flexneri 2a.</title>
        <authorList>
            <person name="Nie H."/>
            <person name="Yang F."/>
            <person name="Zhang X."/>
            <person name="Yang J."/>
            <person name="Chen L."/>
            <person name="Wang J."/>
            <person name="Xiong Z."/>
            <person name="Peng J."/>
            <person name="Sun L."/>
            <person name="Dong J."/>
            <person name="Xue Y."/>
            <person name="Xu X."/>
            <person name="Chen S."/>
            <person name="Yao Z."/>
            <person name="Shen Y."/>
            <person name="Jin Q."/>
        </authorList>
    </citation>
    <scope>NUCLEOTIDE SEQUENCE [LARGE SCALE GENOMIC DNA]</scope>
    <source>
        <strain>8401</strain>
    </source>
</reference>
<dbReference type="EC" id="3.4.11.4" evidence="1"/>
<dbReference type="EMBL" id="CP000266">
    <property type="protein sequence ID" value="ABF03354.1"/>
    <property type="molecule type" value="Genomic_DNA"/>
</dbReference>
<dbReference type="RefSeq" id="WP_000359445.1">
    <property type="nucleotide sequence ID" value="NC_008258.1"/>
</dbReference>
<dbReference type="SMR" id="Q0T5R1"/>
<dbReference type="MEROPS" id="M20.003"/>
<dbReference type="KEGG" id="sfv:SFV_1145"/>
<dbReference type="HOGENOM" id="CLU_053676_0_0_6"/>
<dbReference type="Proteomes" id="UP000000659">
    <property type="component" value="Chromosome"/>
</dbReference>
<dbReference type="GO" id="GO:0005829">
    <property type="term" value="C:cytosol"/>
    <property type="evidence" value="ECO:0007669"/>
    <property type="project" value="TreeGrafter"/>
</dbReference>
<dbReference type="GO" id="GO:0008237">
    <property type="term" value="F:metallopeptidase activity"/>
    <property type="evidence" value="ECO:0007669"/>
    <property type="project" value="UniProtKB-KW"/>
</dbReference>
<dbReference type="GO" id="GO:0045148">
    <property type="term" value="F:tripeptide aminopeptidase activity"/>
    <property type="evidence" value="ECO:0007669"/>
    <property type="project" value="UniProtKB-UniRule"/>
</dbReference>
<dbReference type="GO" id="GO:0008270">
    <property type="term" value="F:zinc ion binding"/>
    <property type="evidence" value="ECO:0007669"/>
    <property type="project" value="UniProtKB-UniRule"/>
</dbReference>
<dbReference type="GO" id="GO:0043171">
    <property type="term" value="P:peptide catabolic process"/>
    <property type="evidence" value="ECO:0007669"/>
    <property type="project" value="UniProtKB-UniRule"/>
</dbReference>
<dbReference type="GO" id="GO:0006508">
    <property type="term" value="P:proteolysis"/>
    <property type="evidence" value="ECO:0007669"/>
    <property type="project" value="UniProtKB-UniRule"/>
</dbReference>
<dbReference type="CDD" id="cd03892">
    <property type="entry name" value="M20_peptT"/>
    <property type="match status" value="1"/>
</dbReference>
<dbReference type="FunFam" id="3.30.70.360:FF:000002">
    <property type="entry name" value="Peptidase T"/>
    <property type="match status" value="1"/>
</dbReference>
<dbReference type="Gene3D" id="3.30.70.360">
    <property type="match status" value="1"/>
</dbReference>
<dbReference type="Gene3D" id="3.40.630.10">
    <property type="entry name" value="Zn peptidases"/>
    <property type="match status" value="1"/>
</dbReference>
<dbReference type="HAMAP" id="MF_00550">
    <property type="entry name" value="Aminopeptidase_M20"/>
    <property type="match status" value="1"/>
</dbReference>
<dbReference type="InterPro" id="IPR001261">
    <property type="entry name" value="ArgE/DapE_CS"/>
</dbReference>
<dbReference type="InterPro" id="IPR036264">
    <property type="entry name" value="Bact_exopeptidase_dim_dom"/>
</dbReference>
<dbReference type="InterPro" id="IPR002933">
    <property type="entry name" value="Peptidase_M20"/>
</dbReference>
<dbReference type="InterPro" id="IPR011650">
    <property type="entry name" value="Peptidase_M20_dimer"/>
</dbReference>
<dbReference type="InterPro" id="IPR010161">
    <property type="entry name" value="Peptidase_M20B"/>
</dbReference>
<dbReference type="NCBIfam" id="TIGR01882">
    <property type="entry name" value="peptidase-T"/>
    <property type="match status" value="1"/>
</dbReference>
<dbReference type="NCBIfam" id="NF003976">
    <property type="entry name" value="PRK05469.1"/>
    <property type="match status" value="1"/>
</dbReference>
<dbReference type="NCBIfam" id="NF009920">
    <property type="entry name" value="PRK13381.1"/>
    <property type="match status" value="1"/>
</dbReference>
<dbReference type="PANTHER" id="PTHR42994">
    <property type="entry name" value="PEPTIDASE T"/>
    <property type="match status" value="1"/>
</dbReference>
<dbReference type="PANTHER" id="PTHR42994:SF1">
    <property type="entry name" value="PEPTIDASE T"/>
    <property type="match status" value="1"/>
</dbReference>
<dbReference type="Pfam" id="PF07687">
    <property type="entry name" value="M20_dimer"/>
    <property type="match status" value="1"/>
</dbReference>
<dbReference type="Pfam" id="PF01546">
    <property type="entry name" value="Peptidase_M20"/>
    <property type="match status" value="1"/>
</dbReference>
<dbReference type="PIRSF" id="PIRSF037215">
    <property type="entry name" value="Peptidase_M20B"/>
    <property type="match status" value="1"/>
</dbReference>
<dbReference type="SUPFAM" id="SSF55031">
    <property type="entry name" value="Bacterial exopeptidase dimerisation domain"/>
    <property type="match status" value="1"/>
</dbReference>
<dbReference type="SUPFAM" id="SSF53187">
    <property type="entry name" value="Zn-dependent exopeptidases"/>
    <property type="match status" value="1"/>
</dbReference>
<dbReference type="PROSITE" id="PS00758">
    <property type="entry name" value="ARGE_DAPE_CPG2_1"/>
    <property type="match status" value="1"/>
</dbReference>
<dbReference type="PROSITE" id="PS00759">
    <property type="entry name" value="ARGE_DAPE_CPG2_2"/>
    <property type="match status" value="1"/>
</dbReference>